<protein>
    <recommendedName>
        <fullName evidence="4">2S seed storage albumin protein</fullName>
    </recommendedName>
    <alternativeName>
        <fullName evidence="4">2S albumin</fullName>
    </alternativeName>
    <component>
        <recommendedName>
            <fullName>2S albumin small chain</fullName>
        </recommendedName>
        <alternativeName>
            <fullName>Moschin A</fullName>
        </alternativeName>
    </component>
    <component>
        <recommendedName>
            <fullName>2S albumin large chain</fullName>
        </recommendedName>
        <alternativeName>
            <fullName>Moschin B</fullName>
        </alternativeName>
    </component>
</protein>
<proteinExistence type="evidence at protein level"/>
<reference evidence="4" key="1">
    <citation type="journal article" date="2002" name="Protein Expr. Purif.">
        <title>Purification and characterization of moschins, arginine-glutamate-rich proteins with translation-inhibiting activity from brown pumpkin (Cucurbita moschata) seeds.</title>
        <authorList>
            <person name="Ng T.B."/>
            <person name="Parkash A."/>
            <person name="Tso W.W."/>
        </authorList>
    </citation>
    <scope>PROTEIN SEQUENCE</scope>
    <scope>FUNCTION</scope>
    <source>
        <tissue evidence="2">Seed</tissue>
    </source>
</reference>
<sequence length="61" mass="7720">ERRAERESQMRADEEFGSQVQYLTQQRRARLPWRREGRSFDEEFRELRNVDEEERRDMMIE</sequence>
<keyword id="KW-0903">Direct protein sequencing</keyword>
<keyword id="KW-1015">Disulfide bond</keyword>
<keyword id="KW-0652">Protein synthesis inhibitor</keyword>
<keyword id="KW-0708">Seed storage protein</keyword>
<keyword id="KW-0758">Storage protein</keyword>
<comment type="function">
    <text evidence="2 4">This is a 2S seed storage protein. Inhibits cell-free protein synthesis.</text>
</comment>
<comment type="subunit">
    <text evidence="4">The mature protein consists of a small and a large chain linked by 2 disulfide bonds.</text>
</comment>
<comment type="miscellaneous">
    <text evidence="2">IC(50) of translation-inhibiting activity is 17 uM (small chain) and 300 nM (large chain).</text>
</comment>
<comment type="similarity">
    <text evidence="1">Belongs to the 2S seed storage albumins family.</text>
</comment>
<comment type="caution">
    <text evidence="4">Cysteine residues characteristic for this protein family are absent.</text>
</comment>
<feature type="chain" id="PRO_0000032149" description="2S albumin small chain" evidence="2">
    <location>
        <begin position="1"/>
        <end position="31" status="greater than"/>
    </location>
</feature>
<feature type="chain" id="PRO_0000032150" description="2S albumin large chain" evidence="2">
    <location>
        <begin position="32"/>
        <end position="61" status="greater than"/>
    </location>
</feature>
<feature type="non-consecutive residues" evidence="4">
    <location>
        <begin position="31"/>
        <end position="32"/>
    </location>
</feature>
<feature type="non-terminal residue" evidence="3">
    <location>
        <position position="61"/>
    </location>
</feature>
<accession>P84576</accession>
<name>2SS_CUCMO</name>
<evidence type="ECO:0000255" key="1"/>
<evidence type="ECO:0000269" key="2">
    <source>
    </source>
</evidence>
<evidence type="ECO:0000303" key="3">
    <source>
    </source>
</evidence>
<evidence type="ECO:0000305" key="4"/>
<organism>
    <name type="scientific">Cucurbita moschata</name>
    <name type="common">Winter crookneck squash</name>
    <name type="synonym">Cucurbita pepo var. moschata</name>
    <dbReference type="NCBI Taxonomy" id="3662"/>
    <lineage>
        <taxon>Eukaryota</taxon>
        <taxon>Viridiplantae</taxon>
        <taxon>Streptophyta</taxon>
        <taxon>Embryophyta</taxon>
        <taxon>Tracheophyta</taxon>
        <taxon>Spermatophyta</taxon>
        <taxon>Magnoliopsida</taxon>
        <taxon>eudicotyledons</taxon>
        <taxon>Gunneridae</taxon>
        <taxon>Pentapetalae</taxon>
        <taxon>rosids</taxon>
        <taxon>fabids</taxon>
        <taxon>Cucurbitales</taxon>
        <taxon>Cucurbitaceae</taxon>
        <taxon>Cucurbiteae</taxon>
        <taxon>Cucurbita</taxon>
    </lineage>
</organism>
<dbReference type="SMR" id="P84576"/>
<dbReference type="Proteomes" id="UP000504609">
    <property type="component" value="Unplaced"/>
</dbReference>
<dbReference type="GO" id="GO:0045735">
    <property type="term" value="F:nutrient reservoir activity"/>
    <property type="evidence" value="ECO:0007669"/>
    <property type="project" value="UniProtKB-KW"/>
</dbReference>
<dbReference type="GO" id="GO:0017148">
    <property type="term" value="P:negative regulation of translation"/>
    <property type="evidence" value="ECO:0007669"/>
    <property type="project" value="UniProtKB-KW"/>
</dbReference>